<organism>
    <name type="scientific">Bradyrhizobium diazoefficiens (strain JCM 10833 / BCRC 13528 / IAM 13628 / NBRC 14792 / USDA 110)</name>
    <dbReference type="NCBI Taxonomy" id="224911"/>
    <lineage>
        <taxon>Bacteria</taxon>
        <taxon>Pseudomonadati</taxon>
        <taxon>Pseudomonadota</taxon>
        <taxon>Alphaproteobacteria</taxon>
        <taxon>Hyphomicrobiales</taxon>
        <taxon>Nitrobacteraceae</taxon>
        <taxon>Bradyrhizobium</taxon>
    </lineage>
</organism>
<name>Y601_BRADU</name>
<feature type="chain" id="PRO_0000291066" description="UPF0434 protein bsr0601">
    <location>
        <begin position="1"/>
        <end position="65"/>
    </location>
</feature>
<evidence type="ECO:0000255" key="1">
    <source>
        <dbReference type="HAMAP-Rule" id="MF_01187"/>
    </source>
</evidence>
<comment type="similarity">
    <text evidence="1">Belongs to the UPF0434 family.</text>
</comment>
<proteinExistence type="inferred from homology"/>
<accession>Q89WS6</accession>
<reference key="1">
    <citation type="journal article" date="2002" name="DNA Res.">
        <title>Complete genomic sequence of nitrogen-fixing symbiotic bacterium Bradyrhizobium japonicum USDA110.</title>
        <authorList>
            <person name="Kaneko T."/>
            <person name="Nakamura Y."/>
            <person name="Sato S."/>
            <person name="Minamisawa K."/>
            <person name="Uchiumi T."/>
            <person name="Sasamoto S."/>
            <person name="Watanabe A."/>
            <person name="Idesawa K."/>
            <person name="Iriguchi M."/>
            <person name="Kawashima K."/>
            <person name="Kohara M."/>
            <person name="Matsumoto M."/>
            <person name="Shimpo S."/>
            <person name="Tsuruoka H."/>
            <person name="Wada T."/>
            <person name="Yamada M."/>
            <person name="Tabata S."/>
        </authorList>
    </citation>
    <scope>NUCLEOTIDE SEQUENCE [LARGE SCALE GENOMIC DNA]</scope>
    <source>
        <strain>JCM 10833 / BCRC 13528 / IAM 13628 / NBRC 14792 / USDA 110</strain>
    </source>
</reference>
<protein>
    <recommendedName>
        <fullName evidence="1">UPF0434 protein bsr0601</fullName>
    </recommendedName>
</protein>
<dbReference type="EMBL" id="BA000040">
    <property type="protein sequence ID" value="BAC45867.1"/>
    <property type="molecule type" value="Genomic_DNA"/>
</dbReference>
<dbReference type="RefSeq" id="NP_767242.1">
    <property type="nucleotide sequence ID" value="NC_004463.1"/>
</dbReference>
<dbReference type="RefSeq" id="WP_011083431.1">
    <property type="nucleotide sequence ID" value="NZ_CP011360.1"/>
</dbReference>
<dbReference type="SMR" id="Q89WS6"/>
<dbReference type="FunCoup" id="Q89WS6">
    <property type="interactions" value="208"/>
</dbReference>
<dbReference type="STRING" id="224911.AAV28_42290"/>
<dbReference type="EnsemblBacteria" id="BAC45867">
    <property type="protein sequence ID" value="BAC45867"/>
    <property type="gene ID" value="BAC45867"/>
</dbReference>
<dbReference type="KEGG" id="bja:bsr0601"/>
<dbReference type="PATRIC" id="fig|224911.44.peg.9143"/>
<dbReference type="eggNOG" id="COG2835">
    <property type="taxonomic scope" value="Bacteria"/>
</dbReference>
<dbReference type="HOGENOM" id="CLU_155659_2_2_5"/>
<dbReference type="InParanoid" id="Q89WS6"/>
<dbReference type="OrthoDB" id="9812205at2"/>
<dbReference type="PhylomeDB" id="Q89WS6"/>
<dbReference type="Proteomes" id="UP000002526">
    <property type="component" value="Chromosome"/>
</dbReference>
<dbReference type="GO" id="GO:0005829">
    <property type="term" value="C:cytosol"/>
    <property type="evidence" value="ECO:0000318"/>
    <property type="project" value="GO_Central"/>
</dbReference>
<dbReference type="FunFam" id="2.20.25.10:FF:000002">
    <property type="entry name" value="UPF0434 protein YcaR"/>
    <property type="match status" value="1"/>
</dbReference>
<dbReference type="Gene3D" id="2.20.25.10">
    <property type="match status" value="1"/>
</dbReference>
<dbReference type="HAMAP" id="MF_01187">
    <property type="entry name" value="UPF0434"/>
    <property type="match status" value="1"/>
</dbReference>
<dbReference type="InterPro" id="IPR005651">
    <property type="entry name" value="Trm112-like"/>
</dbReference>
<dbReference type="PANTHER" id="PTHR33505:SF4">
    <property type="entry name" value="PROTEIN PREY, MITOCHONDRIAL"/>
    <property type="match status" value="1"/>
</dbReference>
<dbReference type="PANTHER" id="PTHR33505">
    <property type="entry name" value="ZGC:162634"/>
    <property type="match status" value="1"/>
</dbReference>
<dbReference type="Pfam" id="PF03966">
    <property type="entry name" value="Trm112p"/>
    <property type="match status" value="1"/>
</dbReference>
<dbReference type="SUPFAM" id="SSF158997">
    <property type="entry name" value="Trm112p-like"/>
    <property type="match status" value="1"/>
</dbReference>
<sequence>MNAPTERPETSVDPKLLEILVCPLTKGPLEFDSAKQELISRSAKLAYPIRDGIPIMLPEEARKID</sequence>
<gene>
    <name type="ordered locus">bsr0601</name>
</gene>
<keyword id="KW-1185">Reference proteome</keyword>